<name>VANG2_XENTR</name>
<accession>Q4VBG5</accession>
<protein>
    <recommendedName>
        <fullName>Vang-like protein 2</fullName>
    </recommendedName>
    <alternativeName>
        <fullName>Protein strabismus</fullName>
    </alternativeName>
    <alternativeName>
        <fullName>Van Gogh-like protein 2</fullName>
    </alternativeName>
</protein>
<keyword id="KW-1003">Cell membrane</keyword>
<keyword id="KW-0217">Developmental protein</keyword>
<keyword id="KW-0306">Gastrulation</keyword>
<keyword id="KW-0472">Membrane</keyword>
<keyword id="KW-1185">Reference proteome</keyword>
<keyword id="KW-0812">Transmembrane</keyword>
<keyword id="KW-1133">Transmembrane helix</keyword>
<keyword id="KW-0879">Wnt signaling pathway</keyword>
<evidence type="ECO:0000250" key="1">
    <source>
        <dbReference type="UniProtKB" id="Q90X64"/>
    </source>
</evidence>
<evidence type="ECO:0000250" key="2">
    <source>
        <dbReference type="UniProtKB" id="Q90Z05"/>
    </source>
</evidence>
<evidence type="ECO:0000250" key="3">
    <source>
        <dbReference type="UniProtKB" id="Q91ZD4"/>
    </source>
</evidence>
<evidence type="ECO:0000250" key="4">
    <source>
        <dbReference type="UniProtKB" id="Q9ULK5"/>
    </source>
</evidence>
<evidence type="ECO:0000255" key="5"/>
<evidence type="ECO:0000256" key="6">
    <source>
        <dbReference type="SAM" id="MobiDB-lite"/>
    </source>
</evidence>
<evidence type="ECO:0000312" key="7">
    <source>
        <dbReference type="EMBL" id="AAH95909.1"/>
    </source>
</evidence>
<gene>
    <name evidence="4" type="primary">vangl2</name>
    <name evidence="1" type="synonym">stbm</name>
</gene>
<proteinExistence type="evidence at transcript level"/>
<comment type="function">
    <text evidence="1 2 3">Has a role in non-canonical Wnt/planar cell polarity (PCP) signaling; can recruit dvl/dsh and prickle from the cytoplasm to the plasma membrane. Acts in a PCP complex to regulate the polarized assembly of fibronectrin on the surface of the mesoderm during gastrulation. Regulates convergent extension in both dorsal mesoderm and neural tissue without affecting cell fate. Regulates neural fold closure during neurulation. May be required for cell surface localization of fzd3 and fzd6 in the inner ear (By similarity).</text>
</comment>
<comment type="subunit">
    <text evidence="1">Interacts with dvl/dsh (By similarity). Interacts with prickle3 (By similarity).</text>
</comment>
<comment type="subcellular location">
    <subcellularLocation>
        <location evidence="1">Cell membrane</location>
        <topology evidence="1">Multi-pass membrane protein</topology>
    </subcellularLocation>
    <text evidence="1">Cell membrane localization is regulated by prickle.</text>
</comment>
<comment type="similarity">
    <text evidence="5">Belongs to the Vang family.</text>
</comment>
<sequence length="521" mass="60083">MDNDSQYSGYSYKSGHSRSSRKHRDRRERHRSKSREGSRGDKSVTIQAPGEPLLDNESTRGEDRDDNWGETTTVVTGTSEHSISHDDITRITKDMEDSAKLDCSRHLGVVIGGALALLSFLTPIAFMLLPQILWREDLEQCGTACEGLFISVAFKLLILLLGSWALFFRRPKAFFPRVFVFRALLMVLVFLLVVSYWLFYGVRILESRDKNYQGIVQYAVSLVDALLFVHYLAVVLLELRQLQPQFTVKVVRSTDGASRFYNIGHLSIQRVAVWILENYYHDFPVYNPALLNLPKSILSKKMSGFKVYSLGEENTTNNSTGQSRAVIAAAARRRDNSHNEYYYEEAEHERRVRKRKARLVVAVEEAFTHIKRLQDEDQKNPREIMDPREAAQAIFASMARAMQKYLRTTKQQPYHTMESILHHLEFCITHDMTPKAFLERYLGPGPTIQYHKDRWLAKQWTLVSEEPVTNGLKDGVVFVLKRQDFSLVVSTKKIPFFKLSEEFVDPKSHKFVMRLQSETSV</sequence>
<dbReference type="EMBL" id="BC095909">
    <property type="protein sequence ID" value="AAH95909.1"/>
    <property type="molecule type" value="mRNA"/>
</dbReference>
<dbReference type="RefSeq" id="NP_001027481.1">
    <property type="nucleotide sequence ID" value="NM_001032310.1"/>
</dbReference>
<dbReference type="RefSeq" id="XP_012825299.1">
    <property type="nucleotide sequence ID" value="XM_012969845.1"/>
</dbReference>
<dbReference type="SMR" id="Q4VBG5"/>
<dbReference type="FunCoup" id="Q4VBG5">
    <property type="interactions" value="1148"/>
</dbReference>
<dbReference type="STRING" id="8364.ENSXETP00000045917"/>
<dbReference type="PaxDb" id="8364-ENSXETP00000012852"/>
<dbReference type="GeneID" id="613073"/>
<dbReference type="KEGG" id="xtr:613073"/>
<dbReference type="AGR" id="Xenbase:XB-GENE-973460"/>
<dbReference type="CTD" id="57216"/>
<dbReference type="Xenbase" id="XB-GENE-973460">
    <property type="gene designation" value="vangl2"/>
</dbReference>
<dbReference type="eggNOG" id="KOG3814">
    <property type="taxonomic scope" value="Eukaryota"/>
</dbReference>
<dbReference type="HOGENOM" id="CLU_015742_1_0_1"/>
<dbReference type="InParanoid" id="Q4VBG5"/>
<dbReference type="OMA" id="MWHREND"/>
<dbReference type="OrthoDB" id="8887313at2759"/>
<dbReference type="PhylomeDB" id="Q4VBG5"/>
<dbReference type="Reactome" id="R-XTR-9696264">
    <property type="pathway name" value="RND3 GTPase cycle"/>
</dbReference>
<dbReference type="Reactome" id="R-XTR-9696273">
    <property type="pathway name" value="RND1 GTPase cycle"/>
</dbReference>
<dbReference type="Proteomes" id="UP000008143">
    <property type="component" value="Chromosome 8"/>
</dbReference>
<dbReference type="Bgee" id="ENSXETG00000005842">
    <property type="expression patterns" value="Expressed in 4-cell stage embryo and 29 other cell types or tissues"/>
</dbReference>
<dbReference type="GO" id="GO:0005886">
    <property type="term" value="C:plasma membrane"/>
    <property type="evidence" value="ECO:0000250"/>
    <property type="project" value="UniProtKB"/>
</dbReference>
<dbReference type="GO" id="GO:0060027">
    <property type="term" value="P:convergent extension involved in gastrulation"/>
    <property type="evidence" value="ECO:0000250"/>
    <property type="project" value="UniProtKB"/>
</dbReference>
<dbReference type="GO" id="GO:0001736">
    <property type="term" value="P:establishment of planar polarity"/>
    <property type="evidence" value="ECO:0000250"/>
    <property type="project" value="UniProtKB"/>
</dbReference>
<dbReference type="GO" id="GO:0090090">
    <property type="term" value="P:negative regulation of canonical Wnt signaling pathway"/>
    <property type="evidence" value="ECO:0000250"/>
    <property type="project" value="UniProtKB"/>
</dbReference>
<dbReference type="GO" id="GO:0007399">
    <property type="term" value="P:nervous system development"/>
    <property type="evidence" value="ECO:0000250"/>
    <property type="project" value="UniProtKB"/>
</dbReference>
<dbReference type="GO" id="GO:0001843">
    <property type="term" value="P:neural tube closure"/>
    <property type="evidence" value="ECO:0000250"/>
    <property type="project" value="UniProtKB"/>
</dbReference>
<dbReference type="GO" id="GO:0016055">
    <property type="term" value="P:Wnt signaling pathway"/>
    <property type="evidence" value="ECO:0007669"/>
    <property type="project" value="UniProtKB-KW"/>
</dbReference>
<dbReference type="InterPro" id="IPR009539">
    <property type="entry name" value="VANGL"/>
</dbReference>
<dbReference type="PANTHER" id="PTHR20886">
    <property type="entry name" value="VANG-LIKE PROTEIN"/>
    <property type="match status" value="1"/>
</dbReference>
<dbReference type="Pfam" id="PF06638">
    <property type="entry name" value="Strabismus"/>
    <property type="match status" value="1"/>
</dbReference>
<dbReference type="PIRSF" id="PIRSF007991">
    <property type="entry name" value="Strabismus"/>
    <property type="match status" value="1"/>
</dbReference>
<organism>
    <name type="scientific">Xenopus tropicalis</name>
    <name type="common">Western clawed frog</name>
    <name type="synonym">Silurana tropicalis</name>
    <dbReference type="NCBI Taxonomy" id="8364"/>
    <lineage>
        <taxon>Eukaryota</taxon>
        <taxon>Metazoa</taxon>
        <taxon>Chordata</taxon>
        <taxon>Craniata</taxon>
        <taxon>Vertebrata</taxon>
        <taxon>Euteleostomi</taxon>
        <taxon>Amphibia</taxon>
        <taxon>Batrachia</taxon>
        <taxon>Anura</taxon>
        <taxon>Pipoidea</taxon>
        <taxon>Pipidae</taxon>
        <taxon>Xenopodinae</taxon>
        <taxon>Xenopus</taxon>
        <taxon>Silurana</taxon>
    </lineage>
</organism>
<reference evidence="7" key="1">
    <citation type="submission" date="2005-05" db="EMBL/GenBank/DDBJ databases">
        <authorList>
            <consortium name="NIH - Xenopus Gene Collection (XGC) project"/>
        </authorList>
    </citation>
    <scope>NUCLEOTIDE SEQUENCE [LARGE SCALE MRNA]</scope>
    <source>
        <tissue evidence="7">Tail bud</tissue>
    </source>
</reference>
<feature type="chain" id="PRO_0000282966" description="Vang-like protein 2">
    <location>
        <begin position="1"/>
        <end position="521"/>
    </location>
</feature>
<feature type="topological domain" description="Cytoplasmic" evidence="5">
    <location>
        <begin position="1"/>
        <end position="108"/>
    </location>
</feature>
<feature type="transmembrane region" description="Helical; Name=1" evidence="5">
    <location>
        <begin position="109"/>
        <end position="129"/>
    </location>
</feature>
<feature type="topological domain" description="Extracellular" evidence="5">
    <location>
        <begin position="130"/>
        <end position="147"/>
    </location>
</feature>
<feature type="transmembrane region" description="Helical; Name=2" evidence="5">
    <location>
        <begin position="148"/>
        <end position="168"/>
    </location>
</feature>
<feature type="topological domain" description="Cytoplasmic" evidence="5">
    <location>
        <begin position="169"/>
        <end position="178"/>
    </location>
</feature>
<feature type="transmembrane region" description="Helical; Name=3" evidence="5">
    <location>
        <begin position="179"/>
        <end position="199"/>
    </location>
</feature>
<feature type="topological domain" description="Extracellular" evidence="5">
    <location>
        <begin position="200"/>
        <end position="218"/>
    </location>
</feature>
<feature type="transmembrane region" description="Helical; Name=4" evidence="5">
    <location>
        <begin position="219"/>
        <end position="239"/>
    </location>
</feature>
<feature type="topological domain" description="Cytoplasmic" evidence="5">
    <location>
        <begin position="240"/>
        <end position="521"/>
    </location>
</feature>
<feature type="region of interest" description="Disordered" evidence="6">
    <location>
        <begin position="1"/>
        <end position="81"/>
    </location>
</feature>
<feature type="short sequence motif" description="PDZ-binding" evidence="5">
    <location>
        <begin position="518"/>
        <end position="521"/>
    </location>
</feature>
<feature type="compositionally biased region" description="Basic residues" evidence="6">
    <location>
        <begin position="15"/>
        <end position="33"/>
    </location>
</feature>
<feature type="compositionally biased region" description="Basic and acidic residues" evidence="6">
    <location>
        <begin position="57"/>
        <end position="67"/>
    </location>
</feature>
<feature type="compositionally biased region" description="Low complexity" evidence="6">
    <location>
        <begin position="69"/>
        <end position="81"/>
    </location>
</feature>